<comment type="function">
    <text evidence="1">Phosphorylation of dTMP to form dTDP in both de novo and salvage pathways of dTTP synthesis.</text>
</comment>
<comment type="catalytic activity">
    <reaction evidence="1">
        <text>dTMP + ATP = dTDP + ADP</text>
        <dbReference type="Rhea" id="RHEA:13517"/>
        <dbReference type="ChEBI" id="CHEBI:30616"/>
        <dbReference type="ChEBI" id="CHEBI:58369"/>
        <dbReference type="ChEBI" id="CHEBI:63528"/>
        <dbReference type="ChEBI" id="CHEBI:456216"/>
        <dbReference type="EC" id="2.7.4.9"/>
    </reaction>
</comment>
<comment type="similarity">
    <text evidence="1">Belongs to the thymidylate kinase family.</text>
</comment>
<reference key="1">
    <citation type="journal article" date="2002" name="Proc. Natl. Acad. Sci. U.S.A.">
        <title>The genome sequence of the facultative intracellular pathogen Brucella melitensis.</title>
        <authorList>
            <person name="DelVecchio V.G."/>
            <person name="Kapatral V."/>
            <person name="Redkar R.J."/>
            <person name="Patra G."/>
            <person name="Mujer C."/>
            <person name="Los T."/>
            <person name="Ivanova N."/>
            <person name="Anderson I."/>
            <person name="Bhattacharyya A."/>
            <person name="Lykidis A."/>
            <person name="Reznik G."/>
            <person name="Jablonski L."/>
            <person name="Larsen N."/>
            <person name="D'Souza M."/>
            <person name="Bernal A."/>
            <person name="Mazur M."/>
            <person name="Goltsman E."/>
            <person name="Selkov E."/>
            <person name="Elzer P.H."/>
            <person name="Hagius S."/>
            <person name="O'Callaghan D."/>
            <person name="Letesson J.-J."/>
            <person name="Haselkorn R."/>
            <person name="Kyrpides N.C."/>
            <person name="Overbeek R."/>
        </authorList>
    </citation>
    <scope>NUCLEOTIDE SEQUENCE [LARGE SCALE GENOMIC DNA]</scope>
    <source>
        <strain>ATCC 23456 / CCUG 17765 / NCTC 10094 / 16M</strain>
    </source>
</reference>
<proteinExistence type="inferred from homology"/>
<dbReference type="EC" id="2.7.4.9" evidence="1"/>
<dbReference type="EMBL" id="AE008917">
    <property type="protein sequence ID" value="AAL52170.1"/>
    <property type="molecule type" value="Genomic_DNA"/>
</dbReference>
<dbReference type="PIR" id="AG3375">
    <property type="entry name" value="AG3375"/>
</dbReference>
<dbReference type="RefSeq" id="WP_002964110.1">
    <property type="nucleotide sequence ID" value="NZ_GG703778.1"/>
</dbReference>
<dbReference type="SMR" id="Q8YH15"/>
<dbReference type="GeneID" id="97533737"/>
<dbReference type="KEGG" id="bme:BMEI0989"/>
<dbReference type="KEGG" id="bmel:DK63_432"/>
<dbReference type="PATRIC" id="fig|224914.52.peg.450"/>
<dbReference type="eggNOG" id="COG0125">
    <property type="taxonomic scope" value="Bacteria"/>
</dbReference>
<dbReference type="PhylomeDB" id="Q8YH15"/>
<dbReference type="Proteomes" id="UP000000419">
    <property type="component" value="Chromosome I"/>
</dbReference>
<dbReference type="GO" id="GO:0005829">
    <property type="term" value="C:cytosol"/>
    <property type="evidence" value="ECO:0007669"/>
    <property type="project" value="TreeGrafter"/>
</dbReference>
<dbReference type="GO" id="GO:0005524">
    <property type="term" value="F:ATP binding"/>
    <property type="evidence" value="ECO:0007669"/>
    <property type="project" value="UniProtKB-UniRule"/>
</dbReference>
<dbReference type="GO" id="GO:0004798">
    <property type="term" value="F:dTMP kinase activity"/>
    <property type="evidence" value="ECO:0007669"/>
    <property type="project" value="UniProtKB-UniRule"/>
</dbReference>
<dbReference type="GO" id="GO:0006233">
    <property type="term" value="P:dTDP biosynthetic process"/>
    <property type="evidence" value="ECO:0007669"/>
    <property type="project" value="InterPro"/>
</dbReference>
<dbReference type="GO" id="GO:0006235">
    <property type="term" value="P:dTTP biosynthetic process"/>
    <property type="evidence" value="ECO:0007669"/>
    <property type="project" value="UniProtKB-UniRule"/>
</dbReference>
<dbReference type="GO" id="GO:0006227">
    <property type="term" value="P:dUDP biosynthetic process"/>
    <property type="evidence" value="ECO:0007669"/>
    <property type="project" value="TreeGrafter"/>
</dbReference>
<dbReference type="CDD" id="cd01672">
    <property type="entry name" value="TMPK"/>
    <property type="match status" value="1"/>
</dbReference>
<dbReference type="FunFam" id="3.40.50.300:FF:000225">
    <property type="entry name" value="Thymidylate kinase"/>
    <property type="match status" value="1"/>
</dbReference>
<dbReference type="Gene3D" id="3.40.50.300">
    <property type="entry name" value="P-loop containing nucleotide triphosphate hydrolases"/>
    <property type="match status" value="1"/>
</dbReference>
<dbReference type="HAMAP" id="MF_00165">
    <property type="entry name" value="Thymidylate_kinase"/>
    <property type="match status" value="1"/>
</dbReference>
<dbReference type="InterPro" id="IPR027417">
    <property type="entry name" value="P-loop_NTPase"/>
</dbReference>
<dbReference type="InterPro" id="IPR039430">
    <property type="entry name" value="Thymidylate_kin-like_dom"/>
</dbReference>
<dbReference type="InterPro" id="IPR018095">
    <property type="entry name" value="Thymidylate_kin_CS"/>
</dbReference>
<dbReference type="InterPro" id="IPR018094">
    <property type="entry name" value="Thymidylate_kinase"/>
</dbReference>
<dbReference type="NCBIfam" id="TIGR00041">
    <property type="entry name" value="DTMP_kinase"/>
    <property type="match status" value="1"/>
</dbReference>
<dbReference type="PANTHER" id="PTHR10344">
    <property type="entry name" value="THYMIDYLATE KINASE"/>
    <property type="match status" value="1"/>
</dbReference>
<dbReference type="PANTHER" id="PTHR10344:SF4">
    <property type="entry name" value="UMP-CMP KINASE 2, MITOCHONDRIAL"/>
    <property type="match status" value="1"/>
</dbReference>
<dbReference type="Pfam" id="PF02223">
    <property type="entry name" value="Thymidylate_kin"/>
    <property type="match status" value="1"/>
</dbReference>
<dbReference type="SUPFAM" id="SSF52540">
    <property type="entry name" value="P-loop containing nucleoside triphosphate hydrolases"/>
    <property type="match status" value="1"/>
</dbReference>
<dbReference type="PROSITE" id="PS01331">
    <property type="entry name" value="THYMIDYLATE_KINASE"/>
    <property type="match status" value="1"/>
</dbReference>
<accession>Q8YH15</accession>
<evidence type="ECO:0000255" key="1">
    <source>
        <dbReference type="HAMAP-Rule" id="MF_00165"/>
    </source>
</evidence>
<feature type="chain" id="PRO_0000155247" description="Thymidylate kinase">
    <location>
        <begin position="1"/>
        <end position="214"/>
    </location>
</feature>
<feature type="binding site" evidence="1">
    <location>
        <begin position="10"/>
        <end position="17"/>
    </location>
    <ligand>
        <name>ATP</name>
        <dbReference type="ChEBI" id="CHEBI:30616"/>
    </ligand>
</feature>
<gene>
    <name evidence="1" type="primary">tmk</name>
    <name type="ordered locus">BMEI0989</name>
</gene>
<name>KTHY_BRUME</name>
<protein>
    <recommendedName>
        <fullName evidence="1">Thymidylate kinase</fullName>
        <ecNumber evidence="1">2.7.4.9</ecNumber>
    </recommendedName>
    <alternativeName>
        <fullName evidence="1">dTMP kinase</fullName>
    </alternativeName>
</protein>
<organism>
    <name type="scientific">Brucella melitensis biotype 1 (strain ATCC 23456 / CCUG 17765 / NCTC 10094 / 16M)</name>
    <dbReference type="NCBI Taxonomy" id="224914"/>
    <lineage>
        <taxon>Bacteria</taxon>
        <taxon>Pseudomonadati</taxon>
        <taxon>Pseudomonadota</taxon>
        <taxon>Alphaproteobacteria</taxon>
        <taxon>Hyphomicrobiales</taxon>
        <taxon>Brucellaceae</taxon>
        <taxon>Brucella/Ochrobactrum group</taxon>
        <taxon>Brucella</taxon>
    </lineage>
</organism>
<keyword id="KW-0067">ATP-binding</keyword>
<keyword id="KW-0418">Kinase</keyword>
<keyword id="KW-0545">Nucleotide biosynthesis</keyword>
<keyword id="KW-0547">Nucleotide-binding</keyword>
<keyword id="KW-0808">Transferase</keyword>
<sequence length="214" mass="23171">MSGLFITFEGGEGAGKSTQIALLASHLRNHGFDPVITREPGGSPGAEAIRHVILSGNAETYGPAMEALLFAAARADHVDQLIRPTLAEGRIVLCDRFIDSSRAYQGVTGNLDATYMAAIERIAIDGAMPDLTLVLDICAERGLSRAGKRRGSDTADRFEKEDIAVHEARRQAFLEIARQEPARCKVIDADRSQEKIADEIRSVVDTILTEKGLL</sequence>